<organism>
    <name type="scientific">Aliivibrio fischeri (strain ATCC 700601 / ES114)</name>
    <name type="common">Vibrio fischeri</name>
    <dbReference type="NCBI Taxonomy" id="312309"/>
    <lineage>
        <taxon>Bacteria</taxon>
        <taxon>Pseudomonadati</taxon>
        <taxon>Pseudomonadota</taxon>
        <taxon>Gammaproteobacteria</taxon>
        <taxon>Vibrionales</taxon>
        <taxon>Vibrionaceae</taxon>
        <taxon>Aliivibrio</taxon>
    </lineage>
</organism>
<accession>Q5E7M3</accession>
<keyword id="KW-0963">Cytoplasm</keyword>
<keyword id="KW-0489">Methyltransferase</keyword>
<keyword id="KW-1185">Reference proteome</keyword>
<keyword id="KW-0698">rRNA processing</keyword>
<keyword id="KW-0949">S-adenosyl-L-methionine</keyword>
<keyword id="KW-0808">Transferase</keyword>
<reference key="1">
    <citation type="journal article" date="2005" name="Proc. Natl. Acad. Sci. U.S.A.">
        <title>Complete genome sequence of Vibrio fischeri: a symbiotic bacterium with pathogenic congeners.</title>
        <authorList>
            <person name="Ruby E.G."/>
            <person name="Urbanowski M."/>
            <person name="Campbell J."/>
            <person name="Dunn A."/>
            <person name="Faini M."/>
            <person name="Gunsalus R."/>
            <person name="Lostroh P."/>
            <person name="Lupp C."/>
            <person name="McCann J."/>
            <person name="Millikan D."/>
            <person name="Schaefer A."/>
            <person name="Stabb E."/>
            <person name="Stevens A."/>
            <person name="Visick K."/>
            <person name="Whistler C."/>
            <person name="Greenberg E.P."/>
        </authorList>
    </citation>
    <scope>NUCLEOTIDE SEQUENCE [LARGE SCALE GENOMIC DNA]</scope>
    <source>
        <strain>ATCC 700601 / ES114</strain>
    </source>
</reference>
<sequence length="209" mass="23363">MSKNKVSASSGRWLKEHFDDKYVLEAQKRGYRSRAIFKIEEIQNKDKLLKPGMTVVDLGAAPGGWSQYAVEQVGDEGQVIACDILPMDSIAGVSFLQGDFREEAVLDALLERIQPDMVDVVMSDMAPNMSGNLAVDQPRAMYLVELALDMCRQVLAPNGSFTVKVFQGEGFDQYLQEVRNMFKVVKIRKPDSSRARSREVYIVATGYKG</sequence>
<proteinExistence type="inferred from homology"/>
<evidence type="ECO:0000255" key="1">
    <source>
        <dbReference type="HAMAP-Rule" id="MF_01547"/>
    </source>
</evidence>
<feature type="chain" id="PRO_0000155547" description="Ribosomal RNA large subunit methyltransferase E">
    <location>
        <begin position="1"/>
        <end position="209"/>
    </location>
</feature>
<feature type="active site" description="Proton acceptor" evidence="1">
    <location>
        <position position="164"/>
    </location>
</feature>
<feature type="binding site" evidence="1">
    <location>
        <position position="63"/>
    </location>
    <ligand>
        <name>S-adenosyl-L-methionine</name>
        <dbReference type="ChEBI" id="CHEBI:59789"/>
    </ligand>
</feature>
<feature type="binding site" evidence="1">
    <location>
        <position position="65"/>
    </location>
    <ligand>
        <name>S-adenosyl-L-methionine</name>
        <dbReference type="ChEBI" id="CHEBI:59789"/>
    </ligand>
</feature>
<feature type="binding site" evidence="1">
    <location>
        <position position="83"/>
    </location>
    <ligand>
        <name>S-adenosyl-L-methionine</name>
        <dbReference type="ChEBI" id="CHEBI:59789"/>
    </ligand>
</feature>
<feature type="binding site" evidence="1">
    <location>
        <position position="99"/>
    </location>
    <ligand>
        <name>S-adenosyl-L-methionine</name>
        <dbReference type="ChEBI" id="CHEBI:59789"/>
    </ligand>
</feature>
<feature type="binding site" evidence="1">
    <location>
        <position position="124"/>
    </location>
    <ligand>
        <name>S-adenosyl-L-methionine</name>
        <dbReference type="ChEBI" id="CHEBI:59789"/>
    </ligand>
</feature>
<name>RLME_ALIF1</name>
<comment type="function">
    <text evidence="1">Specifically methylates the uridine in position 2552 of 23S rRNA at the 2'-O position of the ribose in the fully assembled 50S ribosomal subunit.</text>
</comment>
<comment type="catalytic activity">
    <reaction evidence="1">
        <text>uridine(2552) in 23S rRNA + S-adenosyl-L-methionine = 2'-O-methyluridine(2552) in 23S rRNA + S-adenosyl-L-homocysteine + H(+)</text>
        <dbReference type="Rhea" id="RHEA:42720"/>
        <dbReference type="Rhea" id="RHEA-COMP:10202"/>
        <dbReference type="Rhea" id="RHEA-COMP:10203"/>
        <dbReference type="ChEBI" id="CHEBI:15378"/>
        <dbReference type="ChEBI" id="CHEBI:57856"/>
        <dbReference type="ChEBI" id="CHEBI:59789"/>
        <dbReference type="ChEBI" id="CHEBI:65315"/>
        <dbReference type="ChEBI" id="CHEBI:74478"/>
        <dbReference type="EC" id="2.1.1.166"/>
    </reaction>
</comment>
<comment type="subcellular location">
    <subcellularLocation>
        <location evidence="1">Cytoplasm</location>
    </subcellularLocation>
</comment>
<comment type="similarity">
    <text evidence="1">Belongs to the class I-like SAM-binding methyltransferase superfamily. RNA methyltransferase RlmE family.</text>
</comment>
<protein>
    <recommendedName>
        <fullName evidence="1">Ribosomal RNA large subunit methyltransferase E</fullName>
        <ecNumber evidence="1">2.1.1.166</ecNumber>
    </recommendedName>
    <alternativeName>
        <fullName evidence="1">23S rRNA Um2552 methyltransferase</fullName>
    </alternativeName>
    <alternativeName>
        <fullName evidence="1">rRNA (uridine-2'-O-)-methyltransferase</fullName>
    </alternativeName>
</protein>
<gene>
    <name evidence="1" type="primary">rlmE</name>
    <name evidence="1" type="synonym">ftsJ</name>
    <name evidence="1" type="synonym">rrmJ</name>
    <name type="ordered locus">VF_0478</name>
</gene>
<dbReference type="EC" id="2.1.1.166" evidence="1"/>
<dbReference type="EMBL" id="CP000020">
    <property type="protein sequence ID" value="AAW84973.1"/>
    <property type="molecule type" value="Genomic_DNA"/>
</dbReference>
<dbReference type="RefSeq" id="WP_011261252.1">
    <property type="nucleotide sequence ID" value="NC_006840.2"/>
</dbReference>
<dbReference type="RefSeq" id="YP_203861.1">
    <property type="nucleotide sequence ID" value="NC_006840.2"/>
</dbReference>
<dbReference type="SMR" id="Q5E7M3"/>
<dbReference type="STRING" id="312309.VF_0478"/>
<dbReference type="EnsemblBacteria" id="AAW84973">
    <property type="protein sequence ID" value="AAW84973"/>
    <property type="gene ID" value="VF_0478"/>
</dbReference>
<dbReference type="GeneID" id="54163114"/>
<dbReference type="KEGG" id="vfi:VF_0478"/>
<dbReference type="PATRIC" id="fig|312309.11.peg.469"/>
<dbReference type="eggNOG" id="COG0293">
    <property type="taxonomic scope" value="Bacteria"/>
</dbReference>
<dbReference type="HOGENOM" id="CLU_009422_4_0_6"/>
<dbReference type="OrthoDB" id="9790080at2"/>
<dbReference type="Proteomes" id="UP000000537">
    <property type="component" value="Chromosome I"/>
</dbReference>
<dbReference type="GO" id="GO:0005737">
    <property type="term" value="C:cytoplasm"/>
    <property type="evidence" value="ECO:0007669"/>
    <property type="project" value="UniProtKB-SubCell"/>
</dbReference>
<dbReference type="GO" id="GO:0008650">
    <property type="term" value="F:rRNA (uridine-2'-O-)-methyltransferase activity"/>
    <property type="evidence" value="ECO:0007669"/>
    <property type="project" value="UniProtKB-UniRule"/>
</dbReference>
<dbReference type="CDD" id="cd02440">
    <property type="entry name" value="AdoMet_MTases"/>
    <property type="match status" value="1"/>
</dbReference>
<dbReference type="FunFam" id="3.40.50.150:FF:000005">
    <property type="entry name" value="Ribosomal RNA large subunit methyltransferase E"/>
    <property type="match status" value="1"/>
</dbReference>
<dbReference type="Gene3D" id="3.40.50.150">
    <property type="entry name" value="Vaccinia Virus protein VP39"/>
    <property type="match status" value="1"/>
</dbReference>
<dbReference type="HAMAP" id="MF_01547">
    <property type="entry name" value="RNA_methyltr_E"/>
    <property type="match status" value="1"/>
</dbReference>
<dbReference type="InterPro" id="IPR050082">
    <property type="entry name" value="RNA_methyltr_RlmE"/>
</dbReference>
<dbReference type="InterPro" id="IPR002877">
    <property type="entry name" value="RNA_MeTrfase_FtsJ_dom"/>
</dbReference>
<dbReference type="InterPro" id="IPR015507">
    <property type="entry name" value="rRNA-MeTfrase_E"/>
</dbReference>
<dbReference type="InterPro" id="IPR029063">
    <property type="entry name" value="SAM-dependent_MTases_sf"/>
</dbReference>
<dbReference type="NCBIfam" id="NF008390">
    <property type="entry name" value="PRK11188.1"/>
    <property type="match status" value="1"/>
</dbReference>
<dbReference type="PANTHER" id="PTHR10920">
    <property type="entry name" value="RIBOSOMAL RNA METHYLTRANSFERASE"/>
    <property type="match status" value="1"/>
</dbReference>
<dbReference type="PANTHER" id="PTHR10920:SF18">
    <property type="entry name" value="RRNA METHYLTRANSFERASE 2, MITOCHONDRIAL"/>
    <property type="match status" value="1"/>
</dbReference>
<dbReference type="Pfam" id="PF01728">
    <property type="entry name" value="FtsJ"/>
    <property type="match status" value="1"/>
</dbReference>
<dbReference type="PIRSF" id="PIRSF005461">
    <property type="entry name" value="23S_rRNA_mtase"/>
    <property type="match status" value="1"/>
</dbReference>
<dbReference type="SUPFAM" id="SSF53335">
    <property type="entry name" value="S-adenosyl-L-methionine-dependent methyltransferases"/>
    <property type="match status" value="1"/>
</dbReference>